<protein>
    <recommendedName>
        <fullName evidence="1">Protein translocase subunit SecA</fullName>
        <ecNumber evidence="1">7.4.2.8</ecNumber>
    </recommendedName>
</protein>
<comment type="function">
    <text evidence="1">Part of the Sec protein translocase complex. Interacts with the SecYEG preprotein conducting channel. Has a central role in coupling the hydrolysis of ATP to the transfer of proteins into and across the cell membrane, serving as an ATP-driven molecular motor driving the stepwise translocation of polypeptide chains across the membrane.</text>
</comment>
<comment type="catalytic activity">
    <reaction evidence="1">
        <text>ATP + H2O + cellular proteinSide 1 = ADP + phosphate + cellular proteinSide 2.</text>
        <dbReference type="EC" id="7.4.2.8"/>
    </reaction>
</comment>
<comment type="cofactor">
    <cofactor evidence="1">
        <name>Zn(2+)</name>
        <dbReference type="ChEBI" id="CHEBI:29105"/>
    </cofactor>
    <text evidence="1">May bind 1 zinc ion per subunit.</text>
</comment>
<comment type="subunit">
    <text evidence="1">Monomer and homodimer. Part of the essential Sec protein translocation apparatus which comprises SecA, SecYEG and auxiliary proteins SecDF-YajC and YidC.</text>
</comment>
<comment type="subcellular location">
    <subcellularLocation>
        <location evidence="1">Cell inner membrane</location>
        <topology evidence="1">Peripheral membrane protein</topology>
        <orientation evidence="1">Cytoplasmic side</orientation>
    </subcellularLocation>
    <subcellularLocation>
        <location evidence="1">Cytoplasm</location>
    </subcellularLocation>
    <text evidence="1">Distribution is 50-50.</text>
</comment>
<comment type="similarity">
    <text evidence="1">Belongs to the SecA family.</text>
</comment>
<dbReference type="EC" id="7.4.2.8" evidence="1"/>
<dbReference type="EMBL" id="CP001219">
    <property type="protein sequence ID" value="ACK77824.1"/>
    <property type="molecule type" value="Genomic_DNA"/>
</dbReference>
<dbReference type="RefSeq" id="WP_012536028.1">
    <property type="nucleotide sequence ID" value="NC_011761.1"/>
</dbReference>
<dbReference type="SMR" id="B7J3W9"/>
<dbReference type="STRING" id="243159.AFE_0225"/>
<dbReference type="PaxDb" id="243159-AFE_0225"/>
<dbReference type="GeneID" id="65279606"/>
<dbReference type="KEGG" id="afr:AFE_0225"/>
<dbReference type="eggNOG" id="COG0653">
    <property type="taxonomic scope" value="Bacteria"/>
</dbReference>
<dbReference type="HOGENOM" id="CLU_005314_3_0_6"/>
<dbReference type="Proteomes" id="UP000001362">
    <property type="component" value="Chromosome"/>
</dbReference>
<dbReference type="GO" id="GO:0031522">
    <property type="term" value="C:cell envelope Sec protein transport complex"/>
    <property type="evidence" value="ECO:0007669"/>
    <property type="project" value="TreeGrafter"/>
</dbReference>
<dbReference type="GO" id="GO:0005829">
    <property type="term" value="C:cytosol"/>
    <property type="evidence" value="ECO:0007669"/>
    <property type="project" value="TreeGrafter"/>
</dbReference>
<dbReference type="GO" id="GO:0005886">
    <property type="term" value="C:plasma membrane"/>
    <property type="evidence" value="ECO:0007669"/>
    <property type="project" value="UniProtKB-SubCell"/>
</dbReference>
<dbReference type="GO" id="GO:0005524">
    <property type="term" value="F:ATP binding"/>
    <property type="evidence" value="ECO:0007669"/>
    <property type="project" value="UniProtKB-UniRule"/>
</dbReference>
<dbReference type="GO" id="GO:0046872">
    <property type="term" value="F:metal ion binding"/>
    <property type="evidence" value="ECO:0007669"/>
    <property type="project" value="UniProtKB-KW"/>
</dbReference>
<dbReference type="GO" id="GO:0008564">
    <property type="term" value="F:protein-exporting ATPase activity"/>
    <property type="evidence" value="ECO:0007669"/>
    <property type="project" value="UniProtKB-EC"/>
</dbReference>
<dbReference type="GO" id="GO:0065002">
    <property type="term" value="P:intracellular protein transmembrane transport"/>
    <property type="evidence" value="ECO:0007669"/>
    <property type="project" value="UniProtKB-UniRule"/>
</dbReference>
<dbReference type="GO" id="GO:0017038">
    <property type="term" value="P:protein import"/>
    <property type="evidence" value="ECO:0007669"/>
    <property type="project" value="InterPro"/>
</dbReference>
<dbReference type="GO" id="GO:0006605">
    <property type="term" value="P:protein targeting"/>
    <property type="evidence" value="ECO:0007669"/>
    <property type="project" value="UniProtKB-UniRule"/>
</dbReference>
<dbReference type="GO" id="GO:0043952">
    <property type="term" value="P:protein transport by the Sec complex"/>
    <property type="evidence" value="ECO:0007669"/>
    <property type="project" value="TreeGrafter"/>
</dbReference>
<dbReference type="CDD" id="cd17928">
    <property type="entry name" value="DEXDc_SecA"/>
    <property type="match status" value="1"/>
</dbReference>
<dbReference type="CDD" id="cd18803">
    <property type="entry name" value="SF2_C_secA"/>
    <property type="match status" value="1"/>
</dbReference>
<dbReference type="FunFam" id="3.40.50.300:FF:000113">
    <property type="entry name" value="Preprotein translocase subunit SecA"/>
    <property type="match status" value="1"/>
</dbReference>
<dbReference type="FunFam" id="3.90.1440.10:FF:000001">
    <property type="entry name" value="Preprotein translocase subunit SecA"/>
    <property type="match status" value="1"/>
</dbReference>
<dbReference type="FunFam" id="1.10.3060.10:FF:000003">
    <property type="entry name" value="Protein translocase subunit SecA"/>
    <property type="match status" value="1"/>
</dbReference>
<dbReference type="FunFam" id="3.40.50.300:FF:000334">
    <property type="entry name" value="Protein translocase subunit SecA"/>
    <property type="match status" value="1"/>
</dbReference>
<dbReference type="Gene3D" id="3.10.450.50">
    <property type="match status" value="1"/>
</dbReference>
<dbReference type="Gene3D" id="1.10.3060.10">
    <property type="entry name" value="Helical scaffold and wing domains of SecA"/>
    <property type="match status" value="1"/>
</dbReference>
<dbReference type="Gene3D" id="3.40.50.300">
    <property type="entry name" value="P-loop containing nucleotide triphosphate hydrolases"/>
    <property type="match status" value="2"/>
</dbReference>
<dbReference type="Gene3D" id="3.90.1440.10">
    <property type="entry name" value="SecA, preprotein cross-linking domain"/>
    <property type="match status" value="1"/>
</dbReference>
<dbReference type="HAMAP" id="MF_01382">
    <property type="entry name" value="SecA"/>
    <property type="match status" value="1"/>
</dbReference>
<dbReference type="InterPro" id="IPR014001">
    <property type="entry name" value="Helicase_ATP-bd"/>
</dbReference>
<dbReference type="InterPro" id="IPR001650">
    <property type="entry name" value="Helicase_C-like"/>
</dbReference>
<dbReference type="InterPro" id="IPR027417">
    <property type="entry name" value="P-loop_NTPase"/>
</dbReference>
<dbReference type="InterPro" id="IPR004027">
    <property type="entry name" value="SEC_C_motif"/>
</dbReference>
<dbReference type="InterPro" id="IPR000185">
    <property type="entry name" value="SecA"/>
</dbReference>
<dbReference type="InterPro" id="IPR020937">
    <property type="entry name" value="SecA_CS"/>
</dbReference>
<dbReference type="InterPro" id="IPR011115">
    <property type="entry name" value="SecA_DEAD"/>
</dbReference>
<dbReference type="InterPro" id="IPR014018">
    <property type="entry name" value="SecA_motor_DEAD"/>
</dbReference>
<dbReference type="InterPro" id="IPR011130">
    <property type="entry name" value="SecA_preprotein_X-link_dom"/>
</dbReference>
<dbReference type="InterPro" id="IPR044722">
    <property type="entry name" value="SecA_SF2_C"/>
</dbReference>
<dbReference type="InterPro" id="IPR011116">
    <property type="entry name" value="SecA_Wing/Scaffold"/>
</dbReference>
<dbReference type="InterPro" id="IPR036266">
    <property type="entry name" value="SecA_Wing/Scaffold_sf"/>
</dbReference>
<dbReference type="InterPro" id="IPR036670">
    <property type="entry name" value="SecA_X-link_sf"/>
</dbReference>
<dbReference type="NCBIfam" id="NF009538">
    <property type="entry name" value="PRK12904.1"/>
    <property type="match status" value="1"/>
</dbReference>
<dbReference type="NCBIfam" id="TIGR00963">
    <property type="entry name" value="secA"/>
    <property type="match status" value="1"/>
</dbReference>
<dbReference type="PANTHER" id="PTHR30612:SF0">
    <property type="entry name" value="CHLOROPLAST PROTEIN-TRANSPORTING ATPASE"/>
    <property type="match status" value="1"/>
</dbReference>
<dbReference type="PANTHER" id="PTHR30612">
    <property type="entry name" value="SECA INNER MEMBRANE COMPONENT OF SEC PROTEIN SECRETION SYSTEM"/>
    <property type="match status" value="1"/>
</dbReference>
<dbReference type="Pfam" id="PF21090">
    <property type="entry name" value="P-loop_SecA"/>
    <property type="match status" value="1"/>
</dbReference>
<dbReference type="Pfam" id="PF02810">
    <property type="entry name" value="SEC-C"/>
    <property type="match status" value="1"/>
</dbReference>
<dbReference type="Pfam" id="PF07517">
    <property type="entry name" value="SecA_DEAD"/>
    <property type="match status" value="1"/>
</dbReference>
<dbReference type="Pfam" id="PF01043">
    <property type="entry name" value="SecA_PP_bind"/>
    <property type="match status" value="1"/>
</dbReference>
<dbReference type="Pfam" id="PF07516">
    <property type="entry name" value="SecA_SW"/>
    <property type="match status" value="1"/>
</dbReference>
<dbReference type="PRINTS" id="PR00906">
    <property type="entry name" value="SECA"/>
</dbReference>
<dbReference type="SMART" id="SM00957">
    <property type="entry name" value="SecA_DEAD"/>
    <property type="match status" value="1"/>
</dbReference>
<dbReference type="SMART" id="SM00958">
    <property type="entry name" value="SecA_PP_bind"/>
    <property type="match status" value="1"/>
</dbReference>
<dbReference type="SUPFAM" id="SSF81886">
    <property type="entry name" value="Helical scaffold and wing domains of SecA"/>
    <property type="match status" value="1"/>
</dbReference>
<dbReference type="SUPFAM" id="SSF52540">
    <property type="entry name" value="P-loop containing nucleoside triphosphate hydrolases"/>
    <property type="match status" value="2"/>
</dbReference>
<dbReference type="SUPFAM" id="SSF81767">
    <property type="entry name" value="Pre-protein crosslinking domain of SecA"/>
    <property type="match status" value="1"/>
</dbReference>
<dbReference type="PROSITE" id="PS01312">
    <property type="entry name" value="SECA"/>
    <property type="match status" value="1"/>
</dbReference>
<dbReference type="PROSITE" id="PS51196">
    <property type="entry name" value="SECA_MOTOR_DEAD"/>
    <property type="match status" value="1"/>
</dbReference>
<organism>
    <name type="scientific">Acidithiobacillus ferrooxidans (strain ATCC 23270 / DSM 14882 / CIP 104768 / NCIMB 8455)</name>
    <name type="common">Ferrobacillus ferrooxidans (strain ATCC 23270)</name>
    <dbReference type="NCBI Taxonomy" id="243159"/>
    <lineage>
        <taxon>Bacteria</taxon>
        <taxon>Pseudomonadati</taxon>
        <taxon>Pseudomonadota</taxon>
        <taxon>Acidithiobacillia</taxon>
        <taxon>Acidithiobacillales</taxon>
        <taxon>Acidithiobacillaceae</taxon>
        <taxon>Acidithiobacillus</taxon>
    </lineage>
</organism>
<keyword id="KW-0067">ATP-binding</keyword>
<keyword id="KW-0997">Cell inner membrane</keyword>
<keyword id="KW-1003">Cell membrane</keyword>
<keyword id="KW-0963">Cytoplasm</keyword>
<keyword id="KW-0472">Membrane</keyword>
<keyword id="KW-0479">Metal-binding</keyword>
<keyword id="KW-0547">Nucleotide-binding</keyword>
<keyword id="KW-0653">Protein transport</keyword>
<keyword id="KW-1185">Reference proteome</keyword>
<keyword id="KW-1278">Translocase</keyword>
<keyword id="KW-0811">Translocation</keyword>
<keyword id="KW-0813">Transport</keyword>
<keyword id="KW-0862">Zinc</keyword>
<sequence>MFGTIIRHVVGSRNDRLIKKARAIVAQVNALEDRFKAMDDATLAAQTAIFRERLARGEPLDALLPEAFAVVREVSRRVMGMRQYDVQIIGGFMLHEGKIAEMRTGEGKTLVATLPAYLNALQGKGVHVVTVNDYLASRDAEWVGKIHRFLGLSVGTIISDLSSEERRAAYAADITYGTNNEFGFDYLRDNMAFSPADRVQRGLHYAIIDEVDSILIDEARTPLIISGPTEENTDLYYRVDKLVGSFVVDEDYTVDEKARQVMLTEEGIEKAERLMAESGLLVDGDLYDLANVTLVHHLNQALRAHVIYRRETDYIVRDGEVCIVDEFTGRMMSGRRWSDGLHQAVEAKEGVAVQNENQTLASITFQNYFRMYEKLSGMTGTADTEAFELNQIYGLEVVIIPTHRPVCRTDFADLIYRTSQEKWKAIVEDIRGCQQRGQPVLVGTTSIEHNEFLSHLLKQARISHEVLNAKQHQREAEIIAQAGTPGAVTIATNMAGRGTDIVLGGNVGHQVDMVLANPDLEEEEKTRRIESLKSGWQGLHDAAIAAGGLHIIGTERHESRRIDNQLRGRSGRQGDPGTTRFYLSLDDPLMRIFGSDRLSGLMQKLGMKEGEAIEHPWVTKSIENAQRKVESRNFDIRKQLLEYDDVANEQRRIIYQQRNAFMDADDVSAEIRALRDDVLDAVLAATAPEGVMEERWDLPGLEAALDRIFGLQVPVGQWLEQDKGLTHAALRERIMEMVLSAYAAKESLMGSEMTRHFEKSILLQVLDSQWKDHLASMDHLREGIHLRGYAQKNPKQEYKRESLIMFNAMLDQLREEVVSTLSRLHVSPAPAEPLDWDAIARAAQPRHLQFSHPDFAAAAAPLVEDAGLALTGLGVIGEQEAGHSPAISDDKVGRNQPCPCGSGKKYKHCHGRLQ</sequence>
<proteinExistence type="inferred from homology"/>
<reference key="1">
    <citation type="journal article" date="2008" name="BMC Genomics">
        <title>Acidithiobacillus ferrooxidans metabolism: from genome sequence to industrial applications.</title>
        <authorList>
            <person name="Valdes J."/>
            <person name="Pedroso I."/>
            <person name="Quatrini R."/>
            <person name="Dodson R.J."/>
            <person name="Tettelin H."/>
            <person name="Blake R. II"/>
            <person name="Eisen J.A."/>
            <person name="Holmes D.S."/>
        </authorList>
    </citation>
    <scope>NUCLEOTIDE SEQUENCE [LARGE SCALE GENOMIC DNA]</scope>
    <source>
        <strain>ATCC 23270 / DSM 14882 / CIP 104768 / NCIMB 8455</strain>
    </source>
</reference>
<evidence type="ECO:0000255" key="1">
    <source>
        <dbReference type="HAMAP-Rule" id="MF_01382"/>
    </source>
</evidence>
<feature type="chain" id="PRO_1000144966" description="Protein translocase subunit SecA">
    <location>
        <begin position="1"/>
        <end position="914"/>
    </location>
</feature>
<feature type="binding site" evidence="1">
    <location>
        <position position="87"/>
    </location>
    <ligand>
        <name>ATP</name>
        <dbReference type="ChEBI" id="CHEBI:30616"/>
    </ligand>
</feature>
<feature type="binding site" evidence="1">
    <location>
        <begin position="105"/>
        <end position="109"/>
    </location>
    <ligand>
        <name>ATP</name>
        <dbReference type="ChEBI" id="CHEBI:30616"/>
    </ligand>
</feature>
<feature type="binding site" evidence="1">
    <location>
        <position position="500"/>
    </location>
    <ligand>
        <name>ATP</name>
        <dbReference type="ChEBI" id="CHEBI:30616"/>
    </ligand>
</feature>
<feature type="binding site" evidence="1">
    <location>
        <position position="898"/>
    </location>
    <ligand>
        <name>Zn(2+)</name>
        <dbReference type="ChEBI" id="CHEBI:29105"/>
    </ligand>
</feature>
<feature type="binding site" evidence="1">
    <location>
        <position position="900"/>
    </location>
    <ligand>
        <name>Zn(2+)</name>
        <dbReference type="ChEBI" id="CHEBI:29105"/>
    </ligand>
</feature>
<feature type="binding site" evidence="1">
    <location>
        <position position="909"/>
    </location>
    <ligand>
        <name>Zn(2+)</name>
        <dbReference type="ChEBI" id="CHEBI:29105"/>
    </ligand>
</feature>
<feature type="binding site" evidence="1">
    <location>
        <position position="910"/>
    </location>
    <ligand>
        <name>Zn(2+)</name>
        <dbReference type="ChEBI" id="CHEBI:29105"/>
    </ligand>
</feature>
<gene>
    <name evidence="1" type="primary">secA</name>
    <name type="ordered locus">AFE_0225</name>
</gene>
<name>SECA_ACIF2</name>
<accession>B7J3W9</accession>